<dbReference type="EC" id="3.6.1.74" evidence="2"/>
<dbReference type="EMBL" id="CU329670">
    <property type="protein sequence ID" value="CAB90131.1"/>
    <property type="molecule type" value="Genomic_DNA"/>
</dbReference>
<dbReference type="RefSeq" id="NP_593872.1">
    <property type="nucleotide sequence ID" value="NM_001019302.2"/>
</dbReference>
<dbReference type="PDB" id="4PN0">
    <property type="method" value="X-ray"/>
    <property type="resolution" value="2.60 A"/>
    <property type="chains" value="A/B/C/D=1-303"/>
</dbReference>
<dbReference type="PDB" id="4PN1">
    <property type="method" value="X-ray"/>
    <property type="resolution" value="2.80 A"/>
    <property type="chains" value="A/B/C/D=1-303"/>
</dbReference>
<dbReference type="PDBsum" id="4PN0"/>
<dbReference type="PDBsum" id="4PN1"/>
<dbReference type="SMR" id="Q9P6Q6"/>
<dbReference type="BioGRID" id="280085">
    <property type="interactions" value="9"/>
</dbReference>
<dbReference type="FunCoup" id="Q9P6Q6">
    <property type="interactions" value="47"/>
</dbReference>
<dbReference type="IntAct" id="Q9P6Q6">
    <property type="interactions" value="2"/>
</dbReference>
<dbReference type="STRING" id="284812.Q9P6Q6"/>
<dbReference type="iPTMnet" id="Q9P6Q6"/>
<dbReference type="PaxDb" id="4896-SPAC644.04.1"/>
<dbReference type="EnsemblFungi" id="SPAC644.04.1">
    <property type="protein sequence ID" value="SPAC644.04.1:pep"/>
    <property type="gene ID" value="SPAC644.04"/>
</dbReference>
<dbReference type="GeneID" id="2543671"/>
<dbReference type="KEGG" id="spo:2543671"/>
<dbReference type="PomBase" id="SPAC644.04">
    <property type="gene designation" value="pct1"/>
</dbReference>
<dbReference type="VEuPathDB" id="FungiDB:SPAC644.04"/>
<dbReference type="eggNOG" id="ENOG502RZAX">
    <property type="taxonomic scope" value="Eukaryota"/>
</dbReference>
<dbReference type="HOGENOM" id="CLU_018004_0_0_1"/>
<dbReference type="InParanoid" id="Q9P6Q6"/>
<dbReference type="OMA" id="CPNDAFD"/>
<dbReference type="PhylomeDB" id="Q9P6Q6"/>
<dbReference type="EvolutionaryTrace" id="Q9P6Q6"/>
<dbReference type="PRO" id="PR:Q9P6Q6"/>
<dbReference type="Proteomes" id="UP000002485">
    <property type="component" value="Chromosome I"/>
</dbReference>
<dbReference type="GO" id="GO:0005634">
    <property type="term" value="C:nucleus"/>
    <property type="evidence" value="ECO:0007005"/>
    <property type="project" value="PomBase"/>
</dbReference>
<dbReference type="GO" id="GO:0016887">
    <property type="term" value="F:ATP hydrolysis activity"/>
    <property type="evidence" value="ECO:0000314"/>
    <property type="project" value="PomBase"/>
</dbReference>
<dbReference type="GO" id="GO:0140818">
    <property type="term" value="F:mRNA 5'-triphosphate monophosphatase activity"/>
    <property type="evidence" value="ECO:0000314"/>
    <property type="project" value="PomBase"/>
</dbReference>
<dbReference type="GO" id="GO:0004651">
    <property type="term" value="F:polynucleotide 5'-phosphatase activity"/>
    <property type="evidence" value="ECO:0000318"/>
    <property type="project" value="GO_Central"/>
</dbReference>
<dbReference type="GO" id="GO:0099122">
    <property type="term" value="F:RNA polymerase II C-terminal domain binding"/>
    <property type="evidence" value="ECO:0000353"/>
    <property type="project" value="PomBase"/>
</dbReference>
<dbReference type="GO" id="GO:0006370">
    <property type="term" value="P:7-methylguanosine mRNA capping"/>
    <property type="evidence" value="ECO:0000314"/>
    <property type="project" value="PomBase"/>
</dbReference>
<dbReference type="CDD" id="cd07470">
    <property type="entry name" value="CYTH-like_mRNA_RTPase"/>
    <property type="match status" value="1"/>
</dbReference>
<dbReference type="Gene3D" id="3.20.100.10">
    <property type="entry name" value="mRNA triphosphatase Cet1-like"/>
    <property type="match status" value="1"/>
</dbReference>
<dbReference type="InterPro" id="IPR040343">
    <property type="entry name" value="Cet1/Ctl1"/>
</dbReference>
<dbReference type="InterPro" id="IPR033469">
    <property type="entry name" value="CYTH-like_dom_sf"/>
</dbReference>
<dbReference type="InterPro" id="IPR004206">
    <property type="entry name" value="mRNA_triPase_Cet1"/>
</dbReference>
<dbReference type="InterPro" id="IPR037009">
    <property type="entry name" value="mRNA_triPase_Cet1_sf"/>
</dbReference>
<dbReference type="PANTHER" id="PTHR28118:SF1">
    <property type="entry name" value="POLYNUCLEOTIDE 5'-TRIPHOSPHATASE CTL1-RELATED"/>
    <property type="match status" value="1"/>
</dbReference>
<dbReference type="PANTHER" id="PTHR28118">
    <property type="entry name" value="POLYNUCLEOTIDE 5'-TRIPHOSPHATASE-RELATED"/>
    <property type="match status" value="1"/>
</dbReference>
<dbReference type="Pfam" id="PF02940">
    <property type="entry name" value="mRNA_triPase"/>
    <property type="match status" value="1"/>
</dbReference>
<dbReference type="SUPFAM" id="SSF55154">
    <property type="entry name" value="CYTH-like phosphatases"/>
    <property type="match status" value="1"/>
</dbReference>
<gene>
    <name type="primary">pct1</name>
    <name type="ORF">SPAC644.04</name>
</gene>
<accession>Q9P6Q6</accession>
<proteinExistence type="evidence at protein level"/>
<comment type="function">
    <text evidence="3">First step of mRNA capping. Converts the 5'-triphosphate end of a nascent mRNA chain into a diphosphate end.</text>
</comment>
<comment type="catalytic activity">
    <reaction evidence="2">
        <text>a 5'-end triphospho-ribonucleoside in mRNA + H2O = a 5'-end diphospho-ribonucleoside in mRNA + phosphate + H(+)</text>
        <dbReference type="Rhea" id="RHEA:67004"/>
        <dbReference type="Rhea" id="RHEA-COMP:17164"/>
        <dbReference type="Rhea" id="RHEA-COMP:17165"/>
        <dbReference type="ChEBI" id="CHEBI:15377"/>
        <dbReference type="ChEBI" id="CHEBI:15378"/>
        <dbReference type="ChEBI" id="CHEBI:43474"/>
        <dbReference type="ChEBI" id="CHEBI:167616"/>
        <dbReference type="ChEBI" id="CHEBI:167618"/>
        <dbReference type="EC" id="3.6.1.74"/>
    </reaction>
    <physiologicalReaction direction="left-to-right" evidence="2">
        <dbReference type="Rhea" id="RHEA:67005"/>
    </physiologicalReaction>
</comment>
<comment type="cofactor">
    <cofactor evidence="2">
        <name>Mg(2+)</name>
        <dbReference type="ChEBI" id="CHEBI:18420"/>
    </cofactor>
</comment>
<comment type="subunit">
    <text evidence="3">Heterodimer. The mRNA-capping enzyme is composed of two separate chains alpha and beta, respectively a mRNA guanylyltransferase and an mRNA 5'-triphosphate monophosphatase.</text>
</comment>
<comment type="interaction">
    <interactant intactId="EBI-443547">
        <id>Q9P6Q6</id>
    </interactant>
    <interactant intactId="EBI-443557">
        <id>Q96WV9</id>
        <label>cdk9</label>
    </interactant>
    <organismsDiffer>false</organismsDiffer>
    <experiments>2</experiments>
</comment>
<comment type="subcellular location">
    <subcellularLocation>
        <location evidence="1">Nucleus</location>
    </subcellularLocation>
</comment>
<comment type="similarity">
    <text evidence="4">Belongs to the fungal TPase family.</text>
</comment>
<organism>
    <name type="scientific">Schizosaccharomyces pombe (strain 972 / ATCC 24843)</name>
    <name type="common">Fission yeast</name>
    <dbReference type="NCBI Taxonomy" id="284812"/>
    <lineage>
        <taxon>Eukaryota</taxon>
        <taxon>Fungi</taxon>
        <taxon>Dikarya</taxon>
        <taxon>Ascomycota</taxon>
        <taxon>Taphrinomycotina</taxon>
        <taxon>Schizosaccharomycetes</taxon>
        <taxon>Schizosaccharomycetales</taxon>
        <taxon>Schizosaccharomycetaceae</taxon>
        <taxon>Schizosaccharomyces</taxon>
    </lineage>
</organism>
<keyword id="KW-0002">3D-structure</keyword>
<keyword id="KW-0378">Hydrolase</keyword>
<keyword id="KW-0506">mRNA capping</keyword>
<keyword id="KW-0507">mRNA processing</keyword>
<keyword id="KW-0539">Nucleus</keyword>
<keyword id="KW-1185">Reference proteome</keyword>
<name>CET1_SCHPO</name>
<feature type="chain" id="PRO_0000210117" description="mRNA-capping enzyme subunit beta">
    <location>
        <begin position="1"/>
        <end position="303"/>
    </location>
</feature>
<feature type="helix" evidence="5">
    <location>
        <begin position="56"/>
        <end position="67"/>
    </location>
</feature>
<feature type="turn" evidence="5">
    <location>
        <begin position="68"/>
        <end position="71"/>
    </location>
</feature>
<feature type="strand" evidence="5">
    <location>
        <begin position="77"/>
        <end position="88"/>
    </location>
</feature>
<feature type="turn" evidence="5">
    <location>
        <begin position="89"/>
        <end position="92"/>
    </location>
</feature>
<feature type="strand" evidence="5">
    <location>
        <begin position="98"/>
        <end position="101"/>
    </location>
</feature>
<feature type="strand" evidence="5">
    <location>
        <begin position="103"/>
        <end position="105"/>
    </location>
</feature>
<feature type="helix" evidence="5">
    <location>
        <begin position="107"/>
        <end position="111"/>
    </location>
</feature>
<feature type="strand" evidence="5">
    <location>
        <begin position="112"/>
        <end position="116"/>
    </location>
</feature>
<feature type="helix" evidence="5">
    <location>
        <begin position="121"/>
        <end position="137"/>
    </location>
</feature>
<feature type="strand" evidence="5">
    <location>
        <begin position="147"/>
        <end position="159"/>
    </location>
</feature>
<feature type="strand" evidence="5">
    <location>
        <begin position="167"/>
        <end position="176"/>
    </location>
</feature>
<feature type="strand" evidence="5">
    <location>
        <begin position="179"/>
        <end position="194"/>
    </location>
</feature>
<feature type="strand" evidence="5">
    <location>
        <begin position="201"/>
        <end position="211"/>
    </location>
</feature>
<feature type="strand" evidence="5">
    <location>
        <begin position="222"/>
        <end position="234"/>
    </location>
</feature>
<feature type="strand" evidence="5">
    <location>
        <begin position="237"/>
        <end position="245"/>
    </location>
</feature>
<feature type="strand" evidence="5">
    <location>
        <begin position="249"/>
        <end position="251"/>
    </location>
</feature>
<feature type="strand" evidence="5">
    <location>
        <begin position="256"/>
        <end position="264"/>
    </location>
</feature>
<feature type="helix" evidence="5">
    <location>
        <begin position="266"/>
        <end position="277"/>
    </location>
</feature>
<feature type="helix" evidence="5">
    <location>
        <begin position="282"/>
        <end position="299"/>
    </location>
</feature>
<evidence type="ECO:0000250" key="1"/>
<evidence type="ECO:0000250" key="2">
    <source>
        <dbReference type="UniProtKB" id="O13297"/>
    </source>
</evidence>
<evidence type="ECO:0000269" key="3">
    <source>
    </source>
</evidence>
<evidence type="ECO:0000305" key="4"/>
<evidence type="ECO:0007829" key="5">
    <source>
        <dbReference type="PDB" id="4PN0"/>
    </source>
</evidence>
<protein>
    <recommendedName>
        <fullName>mRNA-capping enzyme subunit beta</fullName>
        <ecNumber evidence="2">3.6.1.74</ecNumber>
    </recommendedName>
    <alternativeName>
        <fullName>mRNA 5'-phosphatase</fullName>
    </alternativeName>
    <alternativeName>
        <fullName>mRNA 5'-triphosphate monophosphatase</fullName>
    </alternativeName>
</protein>
<reference key="1">
    <citation type="journal article" date="2002" name="Nature">
        <title>The genome sequence of Schizosaccharomyces pombe.</title>
        <authorList>
            <person name="Wood V."/>
            <person name="Gwilliam R."/>
            <person name="Rajandream M.A."/>
            <person name="Lyne M.H."/>
            <person name="Lyne R."/>
            <person name="Stewart A."/>
            <person name="Sgouros J.G."/>
            <person name="Peat N."/>
            <person name="Hayles J."/>
            <person name="Baker S.G."/>
            <person name="Basham D."/>
            <person name="Bowman S."/>
            <person name="Brooks K."/>
            <person name="Brown D."/>
            <person name="Brown S."/>
            <person name="Chillingworth T."/>
            <person name="Churcher C.M."/>
            <person name="Collins M."/>
            <person name="Connor R."/>
            <person name="Cronin A."/>
            <person name="Davis P."/>
            <person name="Feltwell T."/>
            <person name="Fraser A."/>
            <person name="Gentles S."/>
            <person name="Goble A."/>
            <person name="Hamlin N."/>
            <person name="Harris D.E."/>
            <person name="Hidalgo J."/>
            <person name="Hodgson G."/>
            <person name="Holroyd S."/>
            <person name="Hornsby T."/>
            <person name="Howarth S."/>
            <person name="Huckle E.J."/>
            <person name="Hunt S."/>
            <person name="Jagels K."/>
            <person name="James K.D."/>
            <person name="Jones L."/>
            <person name="Jones M."/>
            <person name="Leather S."/>
            <person name="McDonald S."/>
            <person name="McLean J."/>
            <person name="Mooney P."/>
            <person name="Moule S."/>
            <person name="Mungall K.L."/>
            <person name="Murphy L.D."/>
            <person name="Niblett D."/>
            <person name="Odell C."/>
            <person name="Oliver K."/>
            <person name="O'Neil S."/>
            <person name="Pearson D."/>
            <person name="Quail M.A."/>
            <person name="Rabbinowitsch E."/>
            <person name="Rutherford K.M."/>
            <person name="Rutter S."/>
            <person name="Saunders D."/>
            <person name="Seeger K."/>
            <person name="Sharp S."/>
            <person name="Skelton J."/>
            <person name="Simmonds M.N."/>
            <person name="Squares R."/>
            <person name="Squares S."/>
            <person name="Stevens K."/>
            <person name="Taylor K."/>
            <person name="Taylor R.G."/>
            <person name="Tivey A."/>
            <person name="Walsh S.V."/>
            <person name="Warren T."/>
            <person name="Whitehead S."/>
            <person name="Woodward J.R."/>
            <person name="Volckaert G."/>
            <person name="Aert R."/>
            <person name="Robben J."/>
            <person name="Grymonprez B."/>
            <person name="Weltjens I."/>
            <person name="Vanstreels E."/>
            <person name="Rieger M."/>
            <person name="Schaefer M."/>
            <person name="Mueller-Auer S."/>
            <person name="Gabel C."/>
            <person name="Fuchs M."/>
            <person name="Duesterhoeft A."/>
            <person name="Fritzc C."/>
            <person name="Holzer E."/>
            <person name="Moestl D."/>
            <person name="Hilbert H."/>
            <person name="Borzym K."/>
            <person name="Langer I."/>
            <person name="Beck A."/>
            <person name="Lehrach H."/>
            <person name="Reinhardt R."/>
            <person name="Pohl T.M."/>
            <person name="Eger P."/>
            <person name="Zimmermann W."/>
            <person name="Wedler H."/>
            <person name="Wambutt R."/>
            <person name="Purnelle B."/>
            <person name="Goffeau A."/>
            <person name="Cadieu E."/>
            <person name="Dreano S."/>
            <person name="Gloux S."/>
            <person name="Lelaure V."/>
            <person name="Mottier S."/>
            <person name="Galibert F."/>
            <person name="Aves S.J."/>
            <person name="Xiang Z."/>
            <person name="Hunt C."/>
            <person name="Moore K."/>
            <person name="Hurst S.M."/>
            <person name="Lucas M."/>
            <person name="Rochet M."/>
            <person name="Gaillardin C."/>
            <person name="Tallada V.A."/>
            <person name="Garzon A."/>
            <person name="Thode G."/>
            <person name="Daga R.R."/>
            <person name="Cruzado L."/>
            <person name="Jimenez J."/>
            <person name="Sanchez M."/>
            <person name="del Rey F."/>
            <person name="Benito J."/>
            <person name="Dominguez A."/>
            <person name="Revuelta J.L."/>
            <person name="Moreno S."/>
            <person name="Armstrong J."/>
            <person name="Forsburg S.L."/>
            <person name="Cerutti L."/>
            <person name="Lowe T."/>
            <person name="McCombie W.R."/>
            <person name="Paulsen I."/>
            <person name="Potashkin J."/>
            <person name="Shpakovski G.V."/>
            <person name="Ussery D."/>
            <person name="Barrell B.G."/>
            <person name="Nurse P."/>
        </authorList>
    </citation>
    <scope>NUCLEOTIDE SEQUENCE [LARGE SCALE GENOMIC DNA]</scope>
    <source>
        <strain>972 / ATCC 24843</strain>
    </source>
</reference>
<reference key="2">
    <citation type="journal article" date="2003" name="J. Biol. Chem.">
        <title>Homodimeric quaternary structure is required for the in vivo function and thermal stability of Saccharomyces cerevisiae and Schizosaccharomyces pombe RNA triphosphatases.</title>
        <authorList>
            <person name="Hausmann S."/>
            <person name="Pei Y."/>
            <person name="Shuman S."/>
        </authorList>
    </citation>
    <scope>FUNCTION</scope>
    <scope>SUBUNIT</scope>
</reference>
<sequence>MDLKGLLHEENELPSIEKRKIDENAVEHDKVERKRTKSVAVPKIEMNFLNKPIVPDTTKVISNFLTHYLITEPVEHVEIEAKLGTLIDLETQNRFEFPVMNETILNPEFNLRTRFESDMTASEHKYLNEFLNQAFRDSQKPGRLPFAYKHTKQVDLFYETEDNSRDKIRVSKNQSDNQVLACVKKRRVADLFLYCPNDAFDIRISISDELPVSMPSGNQQPSLTRLKDRVGYVHQEIKIDLTKTTQNDPVYDTTERHELEVEFGNIADLRDRAQKAKDGMEAPLFRRVQLFMDNVRILRREHS</sequence>